<comment type="catalytic activity">
    <reaction evidence="1">
        <text>CMP + ATP = CDP + ADP</text>
        <dbReference type="Rhea" id="RHEA:11600"/>
        <dbReference type="ChEBI" id="CHEBI:30616"/>
        <dbReference type="ChEBI" id="CHEBI:58069"/>
        <dbReference type="ChEBI" id="CHEBI:60377"/>
        <dbReference type="ChEBI" id="CHEBI:456216"/>
        <dbReference type="EC" id="2.7.4.25"/>
    </reaction>
</comment>
<comment type="catalytic activity">
    <reaction evidence="1">
        <text>dCMP + ATP = dCDP + ADP</text>
        <dbReference type="Rhea" id="RHEA:25094"/>
        <dbReference type="ChEBI" id="CHEBI:30616"/>
        <dbReference type="ChEBI" id="CHEBI:57566"/>
        <dbReference type="ChEBI" id="CHEBI:58593"/>
        <dbReference type="ChEBI" id="CHEBI:456216"/>
        <dbReference type="EC" id="2.7.4.25"/>
    </reaction>
</comment>
<comment type="subcellular location">
    <subcellularLocation>
        <location evidence="1">Cytoplasm</location>
    </subcellularLocation>
</comment>
<comment type="similarity">
    <text evidence="1">Belongs to the cytidylate kinase family. Type 1 subfamily.</text>
</comment>
<sequence>MLDISIAIDGPAGAGKSTIAKIIGNKLNIMYINTGSMYRAVTLMALKNNIEPYDIESLKALINSMNISFNGNNIIVNGKDLEEDIRMPIINNNVSKYAAVEEVRELLVSMQQNISKKYNVVMDGRDIGTVVLKDAPYKFFITASAEVRAKRRLKELKEKGININFRDVLKEIKERDYIDSNRKVNPLKQSKDAILIDTSNFTIEEVVDKICTIIKKD</sequence>
<reference key="1">
    <citation type="journal article" date="2007" name="PLoS ONE">
        <title>Analysis of the neurotoxin complex genes in Clostridium botulinum A1-A4 and B1 strains: BoNT/A3, /Ba4 and /B1 clusters are located within plasmids.</title>
        <authorList>
            <person name="Smith T.J."/>
            <person name="Hill K.K."/>
            <person name="Foley B.T."/>
            <person name="Detter J.C."/>
            <person name="Munk A.C."/>
            <person name="Bruce D.C."/>
            <person name="Doggett N.A."/>
            <person name="Smith L.A."/>
            <person name="Marks J.D."/>
            <person name="Xie G."/>
            <person name="Brettin T.S."/>
        </authorList>
    </citation>
    <scope>NUCLEOTIDE SEQUENCE [LARGE SCALE GENOMIC DNA]</scope>
    <source>
        <strain>ATCC 19397 / Type A</strain>
    </source>
</reference>
<organism>
    <name type="scientific">Clostridium botulinum (strain ATCC 19397 / Type A)</name>
    <dbReference type="NCBI Taxonomy" id="441770"/>
    <lineage>
        <taxon>Bacteria</taxon>
        <taxon>Bacillati</taxon>
        <taxon>Bacillota</taxon>
        <taxon>Clostridia</taxon>
        <taxon>Eubacteriales</taxon>
        <taxon>Clostridiaceae</taxon>
        <taxon>Clostridium</taxon>
    </lineage>
</organism>
<keyword id="KW-0067">ATP-binding</keyword>
<keyword id="KW-0963">Cytoplasm</keyword>
<keyword id="KW-0418">Kinase</keyword>
<keyword id="KW-0547">Nucleotide-binding</keyword>
<keyword id="KW-0808">Transferase</keyword>
<evidence type="ECO:0000255" key="1">
    <source>
        <dbReference type="HAMAP-Rule" id="MF_00238"/>
    </source>
</evidence>
<feature type="chain" id="PRO_1000125278" description="Cytidylate kinase">
    <location>
        <begin position="1"/>
        <end position="217"/>
    </location>
</feature>
<feature type="binding site" evidence="1">
    <location>
        <begin position="10"/>
        <end position="18"/>
    </location>
    <ligand>
        <name>ATP</name>
        <dbReference type="ChEBI" id="CHEBI:30616"/>
    </ligand>
</feature>
<dbReference type="EC" id="2.7.4.25" evidence="1"/>
<dbReference type="EMBL" id="CP000726">
    <property type="protein sequence ID" value="ABS34150.1"/>
    <property type="molecule type" value="Genomic_DNA"/>
</dbReference>
<dbReference type="RefSeq" id="WP_003358949.1">
    <property type="nucleotide sequence ID" value="NC_009697.1"/>
</dbReference>
<dbReference type="SMR" id="A7FUL8"/>
<dbReference type="GeneID" id="5186063"/>
<dbReference type="KEGG" id="cba:CLB_1743"/>
<dbReference type="HOGENOM" id="CLU_079959_0_2_9"/>
<dbReference type="GO" id="GO:0005829">
    <property type="term" value="C:cytosol"/>
    <property type="evidence" value="ECO:0007669"/>
    <property type="project" value="TreeGrafter"/>
</dbReference>
<dbReference type="GO" id="GO:0005524">
    <property type="term" value="F:ATP binding"/>
    <property type="evidence" value="ECO:0007669"/>
    <property type="project" value="UniProtKB-UniRule"/>
</dbReference>
<dbReference type="GO" id="GO:0036430">
    <property type="term" value="F:CMP kinase activity"/>
    <property type="evidence" value="ECO:0007669"/>
    <property type="project" value="RHEA"/>
</dbReference>
<dbReference type="GO" id="GO:0036431">
    <property type="term" value="F:dCMP kinase activity"/>
    <property type="evidence" value="ECO:0007669"/>
    <property type="project" value="RHEA"/>
</dbReference>
<dbReference type="GO" id="GO:0015949">
    <property type="term" value="P:nucleobase-containing small molecule interconversion"/>
    <property type="evidence" value="ECO:0007669"/>
    <property type="project" value="TreeGrafter"/>
</dbReference>
<dbReference type="GO" id="GO:0006220">
    <property type="term" value="P:pyrimidine nucleotide metabolic process"/>
    <property type="evidence" value="ECO:0007669"/>
    <property type="project" value="UniProtKB-UniRule"/>
</dbReference>
<dbReference type="CDD" id="cd02020">
    <property type="entry name" value="CMPK"/>
    <property type="match status" value="1"/>
</dbReference>
<dbReference type="FunFam" id="3.40.50.300:FF:002511">
    <property type="entry name" value="Cytidylate kinase"/>
    <property type="match status" value="1"/>
</dbReference>
<dbReference type="Gene3D" id="3.40.50.300">
    <property type="entry name" value="P-loop containing nucleotide triphosphate hydrolases"/>
    <property type="match status" value="1"/>
</dbReference>
<dbReference type="HAMAP" id="MF_00238">
    <property type="entry name" value="Cytidyl_kinase_type1"/>
    <property type="match status" value="1"/>
</dbReference>
<dbReference type="InterPro" id="IPR003136">
    <property type="entry name" value="Cytidylate_kin"/>
</dbReference>
<dbReference type="InterPro" id="IPR011994">
    <property type="entry name" value="Cytidylate_kinase_dom"/>
</dbReference>
<dbReference type="InterPro" id="IPR027417">
    <property type="entry name" value="P-loop_NTPase"/>
</dbReference>
<dbReference type="NCBIfam" id="TIGR00017">
    <property type="entry name" value="cmk"/>
    <property type="match status" value="1"/>
</dbReference>
<dbReference type="PANTHER" id="PTHR21299:SF2">
    <property type="entry name" value="CYTIDYLATE KINASE"/>
    <property type="match status" value="1"/>
</dbReference>
<dbReference type="PANTHER" id="PTHR21299">
    <property type="entry name" value="CYTIDYLATE KINASE/PANTOATE-BETA-ALANINE LIGASE"/>
    <property type="match status" value="1"/>
</dbReference>
<dbReference type="Pfam" id="PF02224">
    <property type="entry name" value="Cytidylate_kin"/>
    <property type="match status" value="1"/>
</dbReference>
<dbReference type="SUPFAM" id="SSF52540">
    <property type="entry name" value="P-loop containing nucleoside triphosphate hydrolases"/>
    <property type="match status" value="1"/>
</dbReference>
<gene>
    <name evidence="1" type="primary">cmk</name>
    <name type="ordered locus">CLB_1743</name>
</gene>
<name>KCY_CLOB1</name>
<accession>A7FUL8</accession>
<protein>
    <recommendedName>
        <fullName evidence="1">Cytidylate kinase</fullName>
        <shortName evidence="1">CK</shortName>
        <ecNumber evidence="1">2.7.4.25</ecNumber>
    </recommendedName>
    <alternativeName>
        <fullName evidence="1">Cytidine monophosphate kinase</fullName>
        <shortName evidence="1">CMP kinase</shortName>
    </alternativeName>
</protein>
<proteinExistence type="inferred from homology"/>